<evidence type="ECO:0000255" key="1">
    <source>
        <dbReference type="HAMAP-Rule" id="MF_01690"/>
    </source>
</evidence>
<dbReference type="EC" id="3.5.1.18" evidence="1"/>
<dbReference type="EMBL" id="CR628337">
    <property type="protein sequence ID" value="CAH15152.1"/>
    <property type="molecule type" value="Genomic_DNA"/>
</dbReference>
<dbReference type="RefSeq" id="WP_011215062.1">
    <property type="nucleotide sequence ID" value="NC_006369.1"/>
</dbReference>
<dbReference type="SMR" id="Q5WY21"/>
<dbReference type="KEGG" id="lpf:lpl0918"/>
<dbReference type="LegioList" id="lpl0918"/>
<dbReference type="HOGENOM" id="CLU_021802_4_0_6"/>
<dbReference type="UniPathway" id="UPA00034">
    <property type="reaction ID" value="UER00021"/>
</dbReference>
<dbReference type="Proteomes" id="UP000002517">
    <property type="component" value="Chromosome"/>
</dbReference>
<dbReference type="GO" id="GO:0008777">
    <property type="term" value="F:acetylornithine deacetylase activity"/>
    <property type="evidence" value="ECO:0007669"/>
    <property type="project" value="TreeGrafter"/>
</dbReference>
<dbReference type="GO" id="GO:0050897">
    <property type="term" value="F:cobalt ion binding"/>
    <property type="evidence" value="ECO:0007669"/>
    <property type="project" value="UniProtKB-UniRule"/>
</dbReference>
<dbReference type="GO" id="GO:0009014">
    <property type="term" value="F:succinyl-diaminopimelate desuccinylase activity"/>
    <property type="evidence" value="ECO:0007669"/>
    <property type="project" value="UniProtKB-UniRule"/>
</dbReference>
<dbReference type="GO" id="GO:0008270">
    <property type="term" value="F:zinc ion binding"/>
    <property type="evidence" value="ECO:0007669"/>
    <property type="project" value="UniProtKB-UniRule"/>
</dbReference>
<dbReference type="GO" id="GO:0019877">
    <property type="term" value="P:diaminopimelate biosynthetic process"/>
    <property type="evidence" value="ECO:0007669"/>
    <property type="project" value="UniProtKB-UniRule"/>
</dbReference>
<dbReference type="GO" id="GO:0006526">
    <property type="term" value="P:L-arginine biosynthetic process"/>
    <property type="evidence" value="ECO:0007669"/>
    <property type="project" value="TreeGrafter"/>
</dbReference>
<dbReference type="GO" id="GO:0009089">
    <property type="term" value="P:lysine biosynthetic process via diaminopimelate"/>
    <property type="evidence" value="ECO:0007669"/>
    <property type="project" value="UniProtKB-UniRule"/>
</dbReference>
<dbReference type="CDD" id="cd03891">
    <property type="entry name" value="M20_DapE_proteobac"/>
    <property type="match status" value="1"/>
</dbReference>
<dbReference type="Gene3D" id="3.40.630.10">
    <property type="entry name" value="Zn peptidases"/>
    <property type="match status" value="2"/>
</dbReference>
<dbReference type="HAMAP" id="MF_01690">
    <property type="entry name" value="DapE"/>
    <property type="match status" value="1"/>
</dbReference>
<dbReference type="InterPro" id="IPR036264">
    <property type="entry name" value="Bact_exopeptidase_dim_dom"/>
</dbReference>
<dbReference type="InterPro" id="IPR005941">
    <property type="entry name" value="DapE_proteobac"/>
</dbReference>
<dbReference type="InterPro" id="IPR002933">
    <property type="entry name" value="Peptidase_M20"/>
</dbReference>
<dbReference type="InterPro" id="IPR011650">
    <property type="entry name" value="Peptidase_M20_dimer"/>
</dbReference>
<dbReference type="InterPro" id="IPR050072">
    <property type="entry name" value="Peptidase_M20A"/>
</dbReference>
<dbReference type="NCBIfam" id="TIGR01246">
    <property type="entry name" value="dapE_proteo"/>
    <property type="match status" value="1"/>
</dbReference>
<dbReference type="NCBIfam" id="NF009557">
    <property type="entry name" value="PRK13009.1"/>
    <property type="match status" value="1"/>
</dbReference>
<dbReference type="PANTHER" id="PTHR43808">
    <property type="entry name" value="ACETYLORNITHINE DEACETYLASE"/>
    <property type="match status" value="1"/>
</dbReference>
<dbReference type="PANTHER" id="PTHR43808:SF31">
    <property type="entry name" value="N-ACETYL-L-CITRULLINE DEACETYLASE"/>
    <property type="match status" value="1"/>
</dbReference>
<dbReference type="Pfam" id="PF07687">
    <property type="entry name" value="M20_dimer"/>
    <property type="match status" value="1"/>
</dbReference>
<dbReference type="Pfam" id="PF01546">
    <property type="entry name" value="Peptidase_M20"/>
    <property type="match status" value="1"/>
</dbReference>
<dbReference type="SUPFAM" id="SSF55031">
    <property type="entry name" value="Bacterial exopeptidase dimerisation domain"/>
    <property type="match status" value="1"/>
</dbReference>
<dbReference type="SUPFAM" id="SSF53187">
    <property type="entry name" value="Zn-dependent exopeptidases"/>
    <property type="match status" value="1"/>
</dbReference>
<reference key="1">
    <citation type="journal article" date="2004" name="Nat. Genet.">
        <title>Evidence in the Legionella pneumophila genome for exploitation of host cell functions and high genome plasticity.</title>
        <authorList>
            <person name="Cazalet C."/>
            <person name="Rusniok C."/>
            <person name="Brueggemann H."/>
            <person name="Zidane N."/>
            <person name="Magnier A."/>
            <person name="Ma L."/>
            <person name="Tichit M."/>
            <person name="Jarraud S."/>
            <person name="Bouchier C."/>
            <person name="Vandenesch F."/>
            <person name="Kunst F."/>
            <person name="Etienne J."/>
            <person name="Glaser P."/>
            <person name="Buchrieser C."/>
        </authorList>
    </citation>
    <scope>NUCLEOTIDE SEQUENCE [LARGE SCALE GENOMIC DNA]</scope>
    <source>
        <strain>Lens</strain>
    </source>
</reference>
<gene>
    <name evidence="1" type="primary">dapE</name>
    <name type="ordered locus">lpl0918</name>
</gene>
<proteinExistence type="inferred from homology"/>
<comment type="function">
    <text evidence="1">Catalyzes the hydrolysis of N-succinyl-L,L-diaminopimelic acid (SDAP), forming succinate and LL-2,6-diaminopimelate (DAP), an intermediate involved in the bacterial biosynthesis of lysine and meso-diaminopimelic acid, an essential component of bacterial cell walls.</text>
</comment>
<comment type="catalytic activity">
    <reaction evidence="1">
        <text>N-succinyl-(2S,6S)-2,6-diaminopimelate + H2O = (2S,6S)-2,6-diaminopimelate + succinate</text>
        <dbReference type="Rhea" id="RHEA:22608"/>
        <dbReference type="ChEBI" id="CHEBI:15377"/>
        <dbReference type="ChEBI" id="CHEBI:30031"/>
        <dbReference type="ChEBI" id="CHEBI:57609"/>
        <dbReference type="ChEBI" id="CHEBI:58087"/>
        <dbReference type="EC" id="3.5.1.18"/>
    </reaction>
</comment>
<comment type="cofactor">
    <cofactor evidence="1">
        <name>Zn(2+)</name>
        <dbReference type="ChEBI" id="CHEBI:29105"/>
    </cofactor>
    <cofactor evidence="1">
        <name>Co(2+)</name>
        <dbReference type="ChEBI" id="CHEBI:48828"/>
    </cofactor>
    <text evidence="1">Binds 2 Zn(2+) or Co(2+) ions per subunit.</text>
</comment>
<comment type="pathway">
    <text evidence="1">Amino-acid biosynthesis; L-lysine biosynthesis via DAP pathway; LL-2,6-diaminopimelate from (S)-tetrahydrodipicolinate (succinylase route): step 3/3.</text>
</comment>
<comment type="subunit">
    <text evidence="1">Homodimer.</text>
</comment>
<comment type="similarity">
    <text evidence="1">Belongs to the peptidase M20A family. DapE subfamily.</text>
</comment>
<protein>
    <recommendedName>
        <fullName evidence="1">Succinyl-diaminopimelate desuccinylase</fullName>
        <shortName evidence="1">SDAP desuccinylase</shortName>
        <ecNumber evidence="1">3.5.1.18</ecNumber>
    </recommendedName>
    <alternativeName>
        <fullName evidence="1">N-succinyl-LL-2,6-diaminoheptanedioate amidohydrolase</fullName>
    </alternativeName>
</protein>
<feature type="chain" id="PRO_0000375599" description="Succinyl-diaminopimelate desuccinylase">
    <location>
        <begin position="1"/>
        <end position="377"/>
    </location>
</feature>
<feature type="active site" evidence="1">
    <location>
        <position position="68"/>
    </location>
</feature>
<feature type="active site" description="Proton acceptor" evidence="1">
    <location>
        <position position="133"/>
    </location>
</feature>
<feature type="binding site" evidence="1">
    <location>
        <position position="66"/>
    </location>
    <ligand>
        <name>Zn(2+)</name>
        <dbReference type="ChEBI" id="CHEBI:29105"/>
        <label>1</label>
    </ligand>
</feature>
<feature type="binding site" evidence="1">
    <location>
        <position position="99"/>
    </location>
    <ligand>
        <name>Zn(2+)</name>
        <dbReference type="ChEBI" id="CHEBI:29105"/>
        <label>1</label>
    </ligand>
</feature>
<feature type="binding site" evidence="1">
    <location>
        <position position="99"/>
    </location>
    <ligand>
        <name>Zn(2+)</name>
        <dbReference type="ChEBI" id="CHEBI:29105"/>
        <label>2</label>
    </ligand>
</feature>
<feature type="binding site" evidence="1">
    <location>
        <position position="134"/>
    </location>
    <ligand>
        <name>Zn(2+)</name>
        <dbReference type="ChEBI" id="CHEBI:29105"/>
        <label>2</label>
    </ligand>
</feature>
<feature type="binding site" evidence="1">
    <location>
        <position position="163"/>
    </location>
    <ligand>
        <name>Zn(2+)</name>
        <dbReference type="ChEBI" id="CHEBI:29105"/>
        <label>1</label>
    </ligand>
</feature>
<feature type="binding site" evidence="1">
    <location>
        <position position="349"/>
    </location>
    <ligand>
        <name>Zn(2+)</name>
        <dbReference type="ChEBI" id="CHEBI:29105"/>
        <label>2</label>
    </ligand>
</feature>
<keyword id="KW-0028">Amino-acid biosynthesis</keyword>
<keyword id="KW-0170">Cobalt</keyword>
<keyword id="KW-0220">Diaminopimelate biosynthesis</keyword>
<keyword id="KW-0378">Hydrolase</keyword>
<keyword id="KW-0457">Lysine biosynthesis</keyword>
<keyword id="KW-0479">Metal-binding</keyword>
<keyword id="KW-0862">Zinc</keyword>
<name>DAPE_LEGPL</name>
<organism>
    <name type="scientific">Legionella pneumophila (strain Lens)</name>
    <dbReference type="NCBI Taxonomy" id="297245"/>
    <lineage>
        <taxon>Bacteria</taxon>
        <taxon>Pseudomonadati</taxon>
        <taxon>Pseudomonadota</taxon>
        <taxon>Gammaproteobacteria</taxon>
        <taxon>Legionellales</taxon>
        <taxon>Legionellaceae</taxon>
        <taxon>Legionella</taxon>
    </lineage>
</organism>
<accession>Q5WY21</accession>
<sequence length="377" mass="41576">MTDITQILTDLIGFPSITPEDAGCQKYMIQFLEQLGFTCQQLNNGPVSNFFACYGKIGPLLVFAGHTDVVPVGEVSKWDTDPFSLEEKNGMLYGRGVADMKGSLACMLHMARRFIKTYPSFPGRLGFLITSGEEGDEFNLGTPYAMQKLEQQGIVIDYCIVGEPSSSLKTGDVIKIGRRGSLSAKIHLSGKQGHVAYPHLADNPIHRISPVLAELTSMQWDNGNAYFPPTSMQITYIHCGGHAGNIIPGELNLHLNFRYSTEQTDESLKTRVINAFTHHKLNPTIEWRLNGEPFLTNKGILLESCKQTVLEHIGTLPELSTSGGTSDGRFIAPYGVEVIELGLVNATIHQVNECTSLQDLNTLETMYFSICEKLLID</sequence>